<name>RLMN_CARHZ</name>
<protein>
    <recommendedName>
        <fullName evidence="1">Probable dual-specificity RNA methyltransferase RlmN</fullName>
        <ecNumber evidence="1">2.1.1.192</ecNumber>
    </recommendedName>
    <alternativeName>
        <fullName evidence="1">23S rRNA (adenine(2503)-C(2))-methyltransferase</fullName>
    </alternativeName>
    <alternativeName>
        <fullName evidence="1">23S rRNA m2A2503 methyltransferase</fullName>
    </alternativeName>
    <alternativeName>
        <fullName evidence="1">Ribosomal RNA large subunit methyltransferase N</fullName>
    </alternativeName>
    <alternativeName>
        <fullName evidence="1">tRNA (adenine(37)-C(2))-methyltransferase</fullName>
    </alternativeName>
    <alternativeName>
        <fullName evidence="1">tRNA m2A37 methyltransferase</fullName>
    </alternativeName>
</protein>
<dbReference type="EC" id="2.1.1.192" evidence="1"/>
<dbReference type="EMBL" id="CP000141">
    <property type="protein sequence ID" value="ABB16232.1"/>
    <property type="molecule type" value="Genomic_DNA"/>
</dbReference>
<dbReference type="RefSeq" id="WP_011344387.1">
    <property type="nucleotide sequence ID" value="NC_007503.1"/>
</dbReference>
<dbReference type="SMR" id="Q3AC22"/>
<dbReference type="FunCoup" id="Q3AC22">
    <property type="interactions" value="445"/>
</dbReference>
<dbReference type="STRING" id="246194.CHY_1480"/>
<dbReference type="KEGG" id="chy:CHY_1480"/>
<dbReference type="eggNOG" id="COG0820">
    <property type="taxonomic scope" value="Bacteria"/>
</dbReference>
<dbReference type="HOGENOM" id="CLU_029101_0_1_9"/>
<dbReference type="InParanoid" id="Q3AC22"/>
<dbReference type="OrthoDB" id="9793973at2"/>
<dbReference type="Proteomes" id="UP000002706">
    <property type="component" value="Chromosome"/>
</dbReference>
<dbReference type="GO" id="GO:0005737">
    <property type="term" value="C:cytoplasm"/>
    <property type="evidence" value="ECO:0007669"/>
    <property type="project" value="UniProtKB-SubCell"/>
</dbReference>
<dbReference type="GO" id="GO:0051539">
    <property type="term" value="F:4 iron, 4 sulfur cluster binding"/>
    <property type="evidence" value="ECO:0007669"/>
    <property type="project" value="UniProtKB-UniRule"/>
</dbReference>
<dbReference type="GO" id="GO:0046872">
    <property type="term" value="F:metal ion binding"/>
    <property type="evidence" value="ECO:0007669"/>
    <property type="project" value="UniProtKB-KW"/>
</dbReference>
<dbReference type="GO" id="GO:0070040">
    <property type="term" value="F:rRNA (adenine(2503)-C2-)-methyltransferase activity"/>
    <property type="evidence" value="ECO:0007669"/>
    <property type="project" value="UniProtKB-UniRule"/>
</dbReference>
<dbReference type="GO" id="GO:0019843">
    <property type="term" value="F:rRNA binding"/>
    <property type="evidence" value="ECO:0007669"/>
    <property type="project" value="UniProtKB-UniRule"/>
</dbReference>
<dbReference type="GO" id="GO:0002935">
    <property type="term" value="F:tRNA (adenine(37)-C2)-methyltransferase activity"/>
    <property type="evidence" value="ECO:0007669"/>
    <property type="project" value="UniProtKB-UniRule"/>
</dbReference>
<dbReference type="GO" id="GO:0000049">
    <property type="term" value="F:tRNA binding"/>
    <property type="evidence" value="ECO:0007669"/>
    <property type="project" value="UniProtKB-UniRule"/>
</dbReference>
<dbReference type="GO" id="GO:0070475">
    <property type="term" value="P:rRNA base methylation"/>
    <property type="evidence" value="ECO:0007669"/>
    <property type="project" value="UniProtKB-UniRule"/>
</dbReference>
<dbReference type="GO" id="GO:0030488">
    <property type="term" value="P:tRNA methylation"/>
    <property type="evidence" value="ECO:0007669"/>
    <property type="project" value="UniProtKB-UniRule"/>
</dbReference>
<dbReference type="CDD" id="cd01335">
    <property type="entry name" value="Radical_SAM"/>
    <property type="match status" value="1"/>
</dbReference>
<dbReference type="FunFam" id="3.20.20.70:FF:000014">
    <property type="entry name" value="Probable dual-specificity RNA methyltransferase RlmN"/>
    <property type="match status" value="1"/>
</dbReference>
<dbReference type="Gene3D" id="1.10.150.530">
    <property type="match status" value="1"/>
</dbReference>
<dbReference type="Gene3D" id="3.20.20.70">
    <property type="entry name" value="Aldolase class I"/>
    <property type="match status" value="1"/>
</dbReference>
<dbReference type="HAMAP" id="MF_01849">
    <property type="entry name" value="RNA_methyltr_RlmN"/>
    <property type="match status" value="1"/>
</dbReference>
<dbReference type="InterPro" id="IPR013785">
    <property type="entry name" value="Aldolase_TIM"/>
</dbReference>
<dbReference type="InterPro" id="IPR040072">
    <property type="entry name" value="Methyltransferase_A"/>
</dbReference>
<dbReference type="InterPro" id="IPR048641">
    <property type="entry name" value="RlmN_N"/>
</dbReference>
<dbReference type="InterPro" id="IPR027492">
    <property type="entry name" value="RNA_MTrfase_RlmN"/>
</dbReference>
<dbReference type="InterPro" id="IPR004383">
    <property type="entry name" value="rRNA_lsu_MTrfase_RlmN/Cfr"/>
</dbReference>
<dbReference type="InterPro" id="IPR007197">
    <property type="entry name" value="rSAM"/>
</dbReference>
<dbReference type="NCBIfam" id="TIGR00048">
    <property type="entry name" value="rRNA_mod_RlmN"/>
    <property type="match status" value="1"/>
</dbReference>
<dbReference type="PANTHER" id="PTHR30544">
    <property type="entry name" value="23S RRNA METHYLTRANSFERASE"/>
    <property type="match status" value="1"/>
</dbReference>
<dbReference type="PANTHER" id="PTHR30544:SF5">
    <property type="entry name" value="RADICAL SAM CORE DOMAIN-CONTAINING PROTEIN"/>
    <property type="match status" value="1"/>
</dbReference>
<dbReference type="Pfam" id="PF04055">
    <property type="entry name" value="Radical_SAM"/>
    <property type="match status" value="1"/>
</dbReference>
<dbReference type="Pfam" id="PF21016">
    <property type="entry name" value="RlmN_N"/>
    <property type="match status" value="1"/>
</dbReference>
<dbReference type="PIRSF" id="PIRSF006004">
    <property type="entry name" value="CHP00048"/>
    <property type="match status" value="1"/>
</dbReference>
<dbReference type="SFLD" id="SFLDF00275">
    <property type="entry name" value="adenosine_C2_methyltransferase"/>
    <property type="match status" value="1"/>
</dbReference>
<dbReference type="SFLD" id="SFLDG01062">
    <property type="entry name" value="methyltransferase_(Class_A)"/>
    <property type="match status" value="1"/>
</dbReference>
<dbReference type="SUPFAM" id="SSF102114">
    <property type="entry name" value="Radical SAM enzymes"/>
    <property type="match status" value="1"/>
</dbReference>
<dbReference type="PROSITE" id="PS51918">
    <property type="entry name" value="RADICAL_SAM"/>
    <property type="match status" value="1"/>
</dbReference>
<gene>
    <name evidence="1" type="primary">rlmN</name>
    <name type="ordered locus">CHY_1480</name>
</gene>
<proteinExistence type="inferred from homology"/>
<accession>Q3AC22</accession>
<comment type="function">
    <text evidence="1">Specifically methylates position 2 of adenine 2503 in 23S rRNA and position 2 of adenine 37 in tRNAs.</text>
</comment>
<comment type="catalytic activity">
    <reaction evidence="1">
        <text>adenosine(2503) in 23S rRNA + 2 reduced [2Fe-2S]-[ferredoxin] + 2 S-adenosyl-L-methionine = 2-methyladenosine(2503) in 23S rRNA + 5'-deoxyadenosine + L-methionine + 2 oxidized [2Fe-2S]-[ferredoxin] + S-adenosyl-L-homocysteine</text>
        <dbReference type="Rhea" id="RHEA:42916"/>
        <dbReference type="Rhea" id="RHEA-COMP:10000"/>
        <dbReference type="Rhea" id="RHEA-COMP:10001"/>
        <dbReference type="Rhea" id="RHEA-COMP:10152"/>
        <dbReference type="Rhea" id="RHEA-COMP:10282"/>
        <dbReference type="ChEBI" id="CHEBI:17319"/>
        <dbReference type="ChEBI" id="CHEBI:33737"/>
        <dbReference type="ChEBI" id="CHEBI:33738"/>
        <dbReference type="ChEBI" id="CHEBI:57844"/>
        <dbReference type="ChEBI" id="CHEBI:57856"/>
        <dbReference type="ChEBI" id="CHEBI:59789"/>
        <dbReference type="ChEBI" id="CHEBI:74411"/>
        <dbReference type="ChEBI" id="CHEBI:74497"/>
        <dbReference type="EC" id="2.1.1.192"/>
    </reaction>
</comment>
<comment type="catalytic activity">
    <reaction evidence="1">
        <text>adenosine(37) in tRNA + 2 reduced [2Fe-2S]-[ferredoxin] + 2 S-adenosyl-L-methionine = 2-methyladenosine(37) in tRNA + 5'-deoxyadenosine + L-methionine + 2 oxidized [2Fe-2S]-[ferredoxin] + S-adenosyl-L-homocysteine</text>
        <dbReference type="Rhea" id="RHEA:43332"/>
        <dbReference type="Rhea" id="RHEA-COMP:10000"/>
        <dbReference type="Rhea" id="RHEA-COMP:10001"/>
        <dbReference type="Rhea" id="RHEA-COMP:10162"/>
        <dbReference type="Rhea" id="RHEA-COMP:10485"/>
        <dbReference type="ChEBI" id="CHEBI:17319"/>
        <dbReference type="ChEBI" id="CHEBI:33737"/>
        <dbReference type="ChEBI" id="CHEBI:33738"/>
        <dbReference type="ChEBI" id="CHEBI:57844"/>
        <dbReference type="ChEBI" id="CHEBI:57856"/>
        <dbReference type="ChEBI" id="CHEBI:59789"/>
        <dbReference type="ChEBI" id="CHEBI:74411"/>
        <dbReference type="ChEBI" id="CHEBI:74497"/>
        <dbReference type="EC" id="2.1.1.192"/>
    </reaction>
</comment>
<comment type="cofactor">
    <cofactor evidence="1">
        <name>[4Fe-4S] cluster</name>
        <dbReference type="ChEBI" id="CHEBI:49883"/>
    </cofactor>
    <text evidence="1">Binds 1 [4Fe-4S] cluster. The cluster is coordinated with 3 cysteines and an exchangeable S-adenosyl-L-methionine.</text>
</comment>
<comment type="subcellular location">
    <subcellularLocation>
        <location evidence="1">Cytoplasm</location>
    </subcellularLocation>
</comment>
<comment type="miscellaneous">
    <text evidence="1">Reaction proceeds by a ping-pong mechanism involving intermediate methylation of a conserved cysteine residue.</text>
</comment>
<comment type="similarity">
    <text evidence="1">Belongs to the radical SAM superfamily. RlmN family.</text>
</comment>
<reference key="1">
    <citation type="journal article" date="2005" name="PLoS Genet.">
        <title>Life in hot carbon monoxide: the complete genome sequence of Carboxydothermus hydrogenoformans Z-2901.</title>
        <authorList>
            <person name="Wu M."/>
            <person name="Ren Q."/>
            <person name="Durkin A.S."/>
            <person name="Daugherty S.C."/>
            <person name="Brinkac L.M."/>
            <person name="Dodson R.J."/>
            <person name="Madupu R."/>
            <person name="Sullivan S.A."/>
            <person name="Kolonay J.F."/>
            <person name="Nelson W.C."/>
            <person name="Tallon L.J."/>
            <person name="Jones K.M."/>
            <person name="Ulrich L.E."/>
            <person name="Gonzalez J.M."/>
            <person name="Zhulin I.B."/>
            <person name="Robb F.T."/>
            <person name="Eisen J.A."/>
        </authorList>
    </citation>
    <scope>NUCLEOTIDE SEQUENCE [LARGE SCALE GENOMIC DNA]</scope>
    <source>
        <strain>ATCC BAA-161 / DSM 6008 / Z-2901</strain>
    </source>
</reference>
<organism>
    <name type="scientific">Carboxydothermus hydrogenoformans (strain ATCC BAA-161 / DSM 6008 / Z-2901)</name>
    <dbReference type="NCBI Taxonomy" id="246194"/>
    <lineage>
        <taxon>Bacteria</taxon>
        <taxon>Bacillati</taxon>
        <taxon>Bacillota</taxon>
        <taxon>Clostridia</taxon>
        <taxon>Thermoanaerobacterales</taxon>
        <taxon>Thermoanaerobacteraceae</taxon>
        <taxon>Carboxydothermus</taxon>
    </lineage>
</organism>
<sequence length="342" mass="39032">MRAFLDLNSEEIVAWLKENNEKSFRLKQINEWIFKHGELDFNKMTNLPVRLREKLKENFLLPSLKIIHSKKSRDGQSIKYLLKLKDNLGIEAVLLKYRYGNTVCLSTQVGCKMGCKFCATGLGGFSRNLTAGEMIEQILVLKASSSEKITRVVLMGSGEPLDNFTEVLKFMRKINEKDCLNISYRKITVSTCGMVPQIKALAEEKLPVTLAISLHAPDDALRNELIPINKRWGLAELLDAAWYFIDKTGRRVSFEYALIENVNDTVEHALKLAQLLQRKLVHVNLIPYNTIEKRNFKTPSVEKINKFKEVLKRAGIPVTVRRELGDEIDGACGQLKAKYFEV</sequence>
<evidence type="ECO:0000255" key="1">
    <source>
        <dbReference type="HAMAP-Rule" id="MF_01849"/>
    </source>
</evidence>
<evidence type="ECO:0000255" key="2">
    <source>
        <dbReference type="PROSITE-ProRule" id="PRU01266"/>
    </source>
</evidence>
<feature type="chain" id="PRO_0000350099" description="Probable dual-specificity RNA methyltransferase RlmN">
    <location>
        <begin position="1"/>
        <end position="342"/>
    </location>
</feature>
<feature type="domain" description="Radical SAM core" evidence="2">
    <location>
        <begin position="97"/>
        <end position="327"/>
    </location>
</feature>
<feature type="active site" description="Proton acceptor" evidence="1">
    <location>
        <position position="91"/>
    </location>
</feature>
<feature type="active site" description="S-methylcysteine intermediate" evidence="1">
    <location>
        <position position="332"/>
    </location>
</feature>
<feature type="binding site" evidence="1">
    <location>
        <position position="111"/>
    </location>
    <ligand>
        <name>[4Fe-4S] cluster</name>
        <dbReference type="ChEBI" id="CHEBI:49883"/>
        <note>4Fe-4S-S-AdoMet</note>
    </ligand>
</feature>
<feature type="binding site" evidence="1">
    <location>
        <position position="115"/>
    </location>
    <ligand>
        <name>[4Fe-4S] cluster</name>
        <dbReference type="ChEBI" id="CHEBI:49883"/>
        <note>4Fe-4S-S-AdoMet</note>
    </ligand>
</feature>
<feature type="binding site" evidence="1">
    <location>
        <position position="118"/>
    </location>
    <ligand>
        <name>[4Fe-4S] cluster</name>
        <dbReference type="ChEBI" id="CHEBI:49883"/>
        <note>4Fe-4S-S-AdoMet</note>
    </ligand>
</feature>
<feature type="binding site" evidence="1">
    <location>
        <begin position="158"/>
        <end position="159"/>
    </location>
    <ligand>
        <name>S-adenosyl-L-methionine</name>
        <dbReference type="ChEBI" id="CHEBI:59789"/>
    </ligand>
</feature>
<feature type="binding site" evidence="1">
    <location>
        <position position="190"/>
    </location>
    <ligand>
        <name>S-adenosyl-L-methionine</name>
        <dbReference type="ChEBI" id="CHEBI:59789"/>
    </ligand>
</feature>
<feature type="binding site" evidence="1">
    <location>
        <begin position="213"/>
        <end position="215"/>
    </location>
    <ligand>
        <name>S-adenosyl-L-methionine</name>
        <dbReference type="ChEBI" id="CHEBI:59789"/>
    </ligand>
</feature>
<feature type="binding site" evidence="1">
    <location>
        <position position="289"/>
    </location>
    <ligand>
        <name>S-adenosyl-L-methionine</name>
        <dbReference type="ChEBI" id="CHEBI:59789"/>
    </ligand>
</feature>
<feature type="disulfide bond" description="(transient)" evidence="1">
    <location>
        <begin position="104"/>
        <end position="332"/>
    </location>
</feature>
<keyword id="KW-0004">4Fe-4S</keyword>
<keyword id="KW-0963">Cytoplasm</keyword>
<keyword id="KW-1015">Disulfide bond</keyword>
<keyword id="KW-0408">Iron</keyword>
<keyword id="KW-0411">Iron-sulfur</keyword>
<keyword id="KW-0479">Metal-binding</keyword>
<keyword id="KW-0489">Methyltransferase</keyword>
<keyword id="KW-1185">Reference proteome</keyword>
<keyword id="KW-0698">rRNA processing</keyword>
<keyword id="KW-0949">S-adenosyl-L-methionine</keyword>
<keyword id="KW-0808">Transferase</keyword>
<keyword id="KW-0819">tRNA processing</keyword>